<accession>P05949</accession>
<accession>Q80160</accession>
<organismHost>
    <name type="scientific">Homo sapiens</name>
    <name type="common">Human</name>
    <dbReference type="NCBI Taxonomy" id="9606"/>
</organismHost>
<keyword id="KW-0014">AIDS</keyword>
<keyword id="KW-0053">Apoptosis</keyword>
<keyword id="KW-1043">Host membrane</keyword>
<keyword id="KW-0945">Host-virus interaction</keyword>
<keyword id="KW-1090">Inhibition of host innate immune response by virus</keyword>
<keyword id="KW-1084">Inhibition of host tetherin by virus</keyword>
<keyword id="KW-0407">Ion channel</keyword>
<keyword id="KW-0406">Ion transport</keyword>
<keyword id="KW-0472">Membrane</keyword>
<keyword id="KW-0597">Phosphoprotein</keyword>
<keyword id="KW-1185">Reference proteome</keyword>
<keyword id="KW-0812">Transmembrane</keyword>
<keyword id="KW-1133">Transmembrane helix</keyword>
<keyword id="KW-0813">Transport</keyword>
<keyword id="KW-0899">Viral immunoevasion</keyword>
<name>VPU_HV1A2</name>
<evidence type="ECO:0000255" key="1">
    <source>
        <dbReference type="HAMAP-Rule" id="MF_04082"/>
    </source>
</evidence>
<organism>
    <name type="scientific">Human immunodeficiency virus type 1 group M subtype B (isolate ARV2/SF2)</name>
    <name type="common">HIV-1</name>
    <dbReference type="NCBI Taxonomy" id="11685"/>
    <lineage>
        <taxon>Viruses</taxon>
        <taxon>Riboviria</taxon>
        <taxon>Pararnavirae</taxon>
        <taxon>Artverviricota</taxon>
        <taxon>Revtraviricetes</taxon>
        <taxon>Ortervirales</taxon>
        <taxon>Retroviridae</taxon>
        <taxon>Orthoretrovirinae</taxon>
        <taxon>Lentivirus</taxon>
        <taxon>Human immunodeficiency virus type 1</taxon>
    </lineage>
</organism>
<dbReference type="EMBL" id="L07422">
    <property type="protein sequence ID" value="AAA80323.1"/>
    <property type="molecule type" value="Genomic_RNA"/>
</dbReference>
<dbReference type="EMBL" id="K02007">
    <property type="protein sequence ID" value="AAB59881.1"/>
    <property type="status" value="ALT_TERM"/>
    <property type="molecule type" value="Genomic_RNA"/>
</dbReference>
<dbReference type="Proteomes" id="UP000007688">
    <property type="component" value="Genome"/>
</dbReference>
<dbReference type="GO" id="GO:0033644">
    <property type="term" value="C:host cell membrane"/>
    <property type="evidence" value="ECO:0007669"/>
    <property type="project" value="UniProtKB-SubCell"/>
</dbReference>
<dbReference type="GO" id="GO:0016020">
    <property type="term" value="C:membrane"/>
    <property type="evidence" value="ECO:0007669"/>
    <property type="project" value="UniProtKB-UniRule"/>
</dbReference>
<dbReference type="GO" id="GO:0042609">
    <property type="term" value="F:CD4 receptor binding"/>
    <property type="evidence" value="ECO:0007669"/>
    <property type="project" value="UniProtKB-UniRule"/>
</dbReference>
<dbReference type="GO" id="GO:0005261">
    <property type="term" value="F:monoatomic cation channel activity"/>
    <property type="evidence" value="ECO:0007669"/>
    <property type="project" value="UniProtKB-UniRule"/>
</dbReference>
<dbReference type="GO" id="GO:0032801">
    <property type="term" value="P:receptor catabolic process"/>
    <property type="evidence" value="ECO:0007669"/>
    <property type="project" value="UniProtKB-UniRule"/>
</dbReference>
<dbReference type="GO" id="GO:0052170">
    <property type="term" value="P:symbiont-mediated suppression of host innate immune response"/>
    <property type="evidence" value="ECO:0007669"/>
    <property type="project" value="UniProtKB-KW"/>
</dbReference>
<dbReference type="GO" id="GO:0039502">
    <property type="term" value="P:symbiont-mediated suppression of host type I interferon-mediated signaling pathway"/>
    <property type="evidence" value="ECO:0007669"/>
    <property type="project" value="UniProtKB-UniRule"/>
</dbReference>
<dbReference type="GO" id="GO:0039587">
    <property type="term" value="P:symbiont-mediated-mediated suppression of host tetherin activity"/>
    <property type="evidence" value="ECO:0007669"/>
    <property type="project" value="UniProtKB-UniRule"/>
</dbReference>
<dbReference type="GO" id="GO:0019076">
    <property type="term" value="P:viral release from host cell"/>
    <property type="evidence" value="ECO:0007669"/>
    <property type="project" value="UniProtKB-UniRule"/>
</dbReference>
<dbReference type="Gene3D" id="1.10.195.10">
    <property type="entry name" value="HIV-1 VPU cytoplasmic domain"/>
    <property type="match status" value="1"/>
</dbReference>
<dbReference type="HAMAP" id="MF_04082">
    <property type="entry name" value="HIV_VPU"/>
    <property type="match status" value="1"/>
</dbReference>
<dbReference type="InterPro" id="IPR008187">
    <property type="entry name" value="Vpu"/>
</dbReference>
<dbReference type="InterPro" id="IPR009032">
    <property type="entry name" value="Vpu_cyt_dom_sf"/>
</dbReference>
<dbReference type="Pfam" id="PF00558">
    <property type="entry name" value="Vpu"/>
    <property type="match status" value="1"/>
</dbReference>
<dbReference type="SUPFAM" id="SSF57647">
    <property type="entry name" value="HIV-1 VPU cytoplasmic domain"/>
    <property type="match status" value="1"/>
</dbReference>
<comment type="function">
    <text evidence="1">Enhances virion budding by targeting host CD4 and Tetherin/BST2 to proteasome degradation. Degradation of CD4 prevents any unwanted premature interactions between viral Env and its host receptor CD4 in the endoplasmic reticulum. Degradation of antiretroviral protein Tetherin/BST2 is important for virion budding, as BST2 tethers new viral particles to the host cell membrane. Mechanistically, Vpu bridges either CD4 or BST2 to BTRC, a substrate recognition subunit of the Skp1/Cullin/F-box protein E3 ubiquitin ligase, induces their ubiquitination and subsequent proteasomal degradation. The alteration of the E3 ligase specificity by Vpu seems to promote the degradation of host IKBKB, leading to NF-kappa-B down-regulation and subsequent apoptosis. Acts as a viroporin that forms an oligomeric ion channel in membranes. Modulates the host DNA repair mechanisms to promote degradation of nuclear viral cDNA in cells that are already productively infected in order to suppress immune sensing and proviral hyper-integration (superinfection). Manipulates PML-NBs and modulates SUMOylation of host BLM protein thereby enhancing its DNA-end processing activity toward viral unintegrated linear DNA. Also inhibits RAD52-mediated homologous repair of viral cDNA, preventing the generation of dead-end circular forms of single copies of the long terminal repeat and permitting sustained nucleolytic attack.</text>
</comment>
<comment type="activity regulation">
    <text evidence="1">Ion channel activity is inhibited by hexamethylene amiloride in vitro.</text>
</comment>
<comment type="subunit">
    <text evidence="1">Homopentamer. Interacts with host CD4 and BRTC; these interactions induce proteasomal degradation of CD4. Interacts with host BST2; this interaction leads to the degradation of host BST2. Interacts with host FBXW11. Interacts with host AP1M1; this interaction plays a role in the mistrafficking and subsequent degradation of host BST2. Interacts with host RANBP2; this interaction allows Vpu to down-regulate host BLM sumoylation.</text>
</comment>
<comment type="subcellular location">
    <subcellularLocation>
        <location evidence="1">Host membrane</location>
        <topology evidence="1">Single-pass type I membrane protein</topology>
    </subcellularLocation>
</comment>
<comment type="domain">
    <text evidence="1">The N-terminus and transmembrane domains are required for self-oligomerization and proper virion budding, whereas the cytoplasmic domain is required for CD4 degradation. The cytoplasmic domain is composed of 2 amphipathic alpha helix that form a U-shape.</text>
</comment>
<comment type="PTM">
    <text evidence="1">Phosphorylated by host CK2. This phosphorylation is necessary for interaction with human BTRC and degradation of CD4.</text>
</comment>
<comment type="miscellaneous">
    <text evidence="1">HIV-1 lineages are divided in three main groups, M (for Major), O (for Outlier), and N (for New, or Non-M, Non-O). The vast majority of strains found worldwide belong to the group M. Group O seems to be endemic to and largely confined to Cameroon and neighboring countries in West Central Africa, where these viruses represent a small minority of HIV-1 strains. The group N is represented by a limited number of isolates from Cameroonian persons. The group M is further subdivided in 9 clades or subtypes (A to D, F to H, J and K).</text>
</comment>
<comment type="similarity">
    <text evidence="1">Belongs to the HIV-1 VPU protein family.</text>
</comment>
<proteinExistence type="inferred from homology"/>
<feature type="chain" id="PRO_0000085416" description="Protein Vpu">
    <location>
        <begin position="1"/>
        <end position="81"/>
    </location>
</feature>
<feature type="topological domain" description="Extracellular" evidence="1">
    <location>
        <begin position="1"/>
        <end position="7"/>
    </location>
</feature>
<feature type="transmembrane region" description="Helical" evidence="1">
    <location>
        <begin position="8"/>
        <end position="28"/>
    </location>
</feature>
<feature type="topological domain" description="Cytoplasmic" evidence="1">
    <location>
        <begin position="29"/>
        <end position="81"/>
    </location>
</feature>
<feature type="modified residue" description="Phosphoserine; by host CK2" evidence="1">
    <location>
        <position position="53"/>
    </location>
</feature>
<feature type="modified residue" description="Phosphoserine; by host CK2" evidence="1">
    <location>
        <position position="57"/>
    </location>
</feature>
<sequence length="81" mass="9373">MQSLQILAIVSLVVVAIIAIVVWTIVLIEYRKILRQRKIDRLFDRIREKAEDSGNESERDQEELSALVEMGHLAPWDVDDL</sequence>
<gene>
    <name evidence="1" type="primary">vpu</name>
</gene>
<protein>
    <recommendedName>
        <fullName evidence="1">Protein Vpu</fullName>
    </recommendedName>
    <alternativeName>
        <fullName evidence="1">U ORF protein</fullName>
    </alternativeName>
    <alternativeName>
        <fullName evidence="1">Viral protein U</fullName>
    </alternativeName>
</protein>
<reference key="1">
    <citation type="journal article" date="1991" name="J. Virol.">
        <title>Host range, replicative, and cytopathic properties of human immunodeficiency virus type 1 are determined by very few amino acid changes in tat and gp120.</title>
        <authorList>
            <person name="Cheng-Mayer C."/>
            <person name="Shioda T."/>
            <person name="Levy J.A."/>
        </authorList>
    </citation>
    <scope>NUCLEOTIDE SEQUENCE [GENOMIC RNA]</scope>
    <source>
        <strain>Isolate SF13</strain>
    </source>
</reference>
<reference key="2">
    <citation type="journal article" date="1985" name="Science">
        <title>Nucleotide sequence and expression of an AIDS-associated retrovirus (ARV-2).</title>
        <authorList>
            <person name="Sanchez-Pescador R."/>
            <person name="Power M.D."/>
            <person name="Barr P.J."/>
            <person name="Steimer K.S."/>
            <person name="Stempien M.M."/>
            <person name="Brown-Shimer S.L."/>
            <person name="Gee W.W."/>
            <person name="Renard A."/>
            <person name="Randolph A."/>
            <person name="Levy J.A."/>
            <person name="Dina D."/>
            <person name="Luciw P.A."/>
        </authorList>
    </citation>
    <scope>NUCLEOTIDE SEQUENCE [GENOMIC RNA] OF 1-38</scope>
</reference>